<proteinExistence type="inferred from homology"/>
<gene>
    <name evidence="1" type="primary">mtnN</name>
    <name type="ordered locus">EFER_0182</name>
</gene>
<feature type="chain" id="PRO_1000187425" description="5'-methylthioadenosine/S-adenosylhomocysteine nucleosidase">
    <location>
        <begin position="1"/>
        <end position="232"/>
    </location>
</feature>
<feature type="active site" description="Proton acceptor" evidence="1">
    <location>
        <position position="12"/>
    </location>
</feature>
<feature type="active site" description="Proton donor" evidence="1">
    <location>
        <position position="197"/>
    </location>
</feature>
<feature type="binding site" evidence="1">
    <location>
        <position position="78"/>
    </location>
    <ligand>
        <name>substrate</name>
    </ligand>
</feature>
<feature type="binding site" evidence="1">
    <location>
        <position position="152"/>
    </location>
    <ligand>
        <name>substrate</name>
    </ligand>
</feature>
<feature type="binding site" evidence="1">
    <location>
        <begin position="173"/>
        <end position="174"/>
    </location>
    <ligand>
        <name>substrate</name>
    </ligand>
</feature>
<sequence length="232" mass="24502">MKIGIIGAMEEEVTLLRDKIENRQTCTMGGVEIYTGQLNGTEVALLKSGIGKVAAAMGATLLIDHFKPDVIINTGSAGGLAPTLKVGDIVVSDEARYHDADVTAFGYEYGQLPGCPAGFKADDKLIAAAEACIAEHNLNAVRGLIVSGDAFINGSVSLAKIRHNFPQAIAVEMEATAIAHVCHNFKVPFVVVRAISDVADQQSHISFDEFLAVAAKQSSLMVETLVQKLAHG</sequence>
<protein>
    <recommendedName>
        <fullName evidence="1">5'-methylthioadenosine/S-adenosylhomocysteine nucleosidase</fullName>
        <shortName evidence="1">MTA/SAH nucleosidase</shortName>
        <shortName evidence="1">MTAN</shortName>
        <ecNumber evidence="1">3.2.2.9</ecNumber>
    </recommendedName>
    <alternativeName>
        <fullName evidence="1">5'-deoxyadenosine nucleosidase</fullName>
        <shortName evidence="1">DOA nucleosidase</shortName>
        <shortName evidence="1">dAdo nucleosidase</shortName>
    </alternativeName>
    <alternativeName>
        <fullName evidence="1">5'-methylthioadenosine nucleosidase</fullName>
        <shortName evidence="1">MTA nucleosidase</shortName>
    </alternativeName>
    <alternativeName>
        <fullName evidence="1">S-adenosylhomocysteine nucleosidase</fullName>
        <shortName evidence="1">AdoHcy nucleosidase</shortName>
        <shortName evidence="1">SAH nucleosidase</shortName>
        <shortName evidence="1">SRH nucleosidase</shortName>
    </alternativeName>
</protein>
<evidence type="ECO:0000255" key="1">
    <source>
        <dbReference type="HAMAP-Rule" id="MF_01684"/>
    </source>
</evidence>
<dbReference type="EC" id="3.2.2.9" evidence="1"/>
<dbReference type="EMBL" id="CU928158">
    <property type="protein sequence ID" value="CAQ87763.1"/>
    <property type="molecule type" value="Genomic_DNA"/>
</dbReference>
<dbReference type="RefSeq" id="WP_000689837.1">
    <property type="nucleotide sequence ID" value="NC_011740.1"/>
</dbReference>
<dbReference type="SMR" id="B7LWC0"/>
<dbReference type="GeneID" id="75058733"/>
<dbReference type="KEGG" id="efe:EFER_0182"/>
<dbReference type="HOGENOM" id="CLU_031248_2_2_6"/>
<dbReference type="OrthoDB" id="9792278at2"/>
<dbReference type="UniPathway" id="UPA00904">
    <property type="reaction ID" value="UER00871"/>
</dbReference>
<dbReference type="Proteomes" id="UP000000745">
    <property type="component" value="Chromosome"/>
</dbReference>
<dbReference type="GO" id="GO:0005829">
    <property type="term" value="C:cytosol"/>
    <property type="evidence" value="ECO:0007669"/>
    <property type="project" value="TreeGrafter"/>
</dbReference>
<dbReference type="GO" id="GO:0008782">
    <property type="term" value="F:adenosylhomocysteine nucleosidase activity"/>
    <property type="evidence" value="ECO:0007669"/>
    <property type="project" value="UniProtKB-UniRule"/>
</dbReference>
<dbReference type="GO" id="GO:0008930">
    <property type="term" value="F:methylthioadenosine nucleosidase activity"/>
    <property type="evidence" value="ECO:0007669"/>
    <property type="project" value="UniProtKB-UniRule"/>
</dbReference>
<dbReference type="GO" id="GO:0019509">
    <property type="term" value="P:L-methionine salvage from methylthioadenosine"/>
    <property type="evidence" value="ECO:0007669"/>
    <property type="project" value="UniProtKB-UniRule"/>
</dbReference>
<dbReference type="GO" id="GO:0019284">
    <property type="term" value="P:L-methionine salvage from S-adenosylmethionine"/>
    <property type="evidence" value="ECO:0007669"/>
    <property type="project" value="TreeGrafter"/>
</dbReference>
<dbReference type="GO" id="GO:0046124">
    <property type="term" value="P:purine deoxyribonucleoside catabolic process"/>
    <property type="evidence" value="ECO:0007669"/>
    <property type="project" value="UniProtKB-UniRule"/>
</dbReference>
<dbReference type="CDD" id="cd09008">
    <property type="entry name" value="MTAN"/>
    <property type="match status" value="1"/>
</dbReference>
<dbReference type="FunFam" id="3.40.50.1580:FF:000001">
    <property type="entry name" value="MTA/SAH nucleosidase family protein"/>
    <property type="match status" value="1"/>
</dbReference>
<dbReference type="Gene3D" id="3.40.50.1580">
    <property type="entry name" value="Nucleoside phosphorylase domain"/>
    <property type="match status" value="1"/>
</dbReference>
<dbReference type="HAMAP" id="MF_01684">
    <property type="entry name" value="Salvage_MtnN"/>
    <property type="match status" value="1"/>
</dbReference>
<dbReference type="InterPro" id="IPR010049">
    <property type="entry name" value="MTA_SAH_Nsdase"/>
</dbReference>
<dbReference type="InterPro" id="IPR000845">
    <property type="entry name" value="Nucleoside_phosphorylase_d"/>
</dbReference>
<dbReference type="InterPro" id="IPR035994">
    <property type="entry name" value="Nucleoside_phosphorylase_sf"/>
</dbReference>
<dbReference type="NCBIfam" id="TIGR01704">
    <property type="entry name" value="MTA_SAH-Nsdase"/>
    <property type="match status" value="1"/>
</dbReference>
<dbReference type="NCBIfam" id="NF004079">
    <property type="entry name" value="PRK05584.1"/>
    <property type="match status" value="1"/>
</dbReference>
<dbReference type="PANTHER" id="PTHR46832">
    <property type="entry name" value="5'-METHYLTHIOADENOSINE/S-ADENOSYLHOMOCYSTEINE NUCLEOSIDASE"/>
    <property type="match status" value="1"/>
</dbReference>
<dbReference type="PANTHER" id="PTHR46832:SF1">
    <property type="entry name" value="5'-METHYLTHIOADENOSINE_S-ADENOSYLHOMOCYSTEINE NUCLEOSIDASE"/>
    <property type="match status" value="1"/>
</dbReference>
<dbReference type="Pfam" id="PF01048">
    <property type="entry name" value="PNP_UDP_1"/>
    <property type="match status" value="1"/>
</dbReference>
<dbReference type="SUPFAM" id="SSF53167">
    <property type="entry name" value="Purine and uridine phosphorylases"/>
    <property type="match status" value="1"/>
</dbReference>
<organism>
    <name type="scientific">Escherichia fergusonii (strain ATCC 35469 / DSM 13698 / CCUG 18766 / IAM 14443 / JCM 21226 / LMG 7866 / NBRC 102419 / NCTC 12128 / CDC 0568-73)</name>
    <dbReference type="NCBI Taxonomy" id="585054"/>
    <lineage>
        <taxon>Bacteria</taxon>
        <taxon>Pseudomonadati</taxon>
        <taxon>Pseudomonadota</taxon>
        <taxon>Gammaproteobacteria</taxon>
        <taxon>Enterobacterales</taxon>
        <taxon>Enterobacteriaceae</taxon>
        <taxon>Escherichia</taxon>
    </lineage>
</organism>
<keyword id="KW-0028">Amino-acid biosynthesis</keyword>
<keyword id="KW-0378">Hydrolase</keyword>
<keyword id="KW-0486">Methionine biosynthesis</keyword>
<accession>B7LWC0</accession>
<comment type="function">
    <text evidence="1">Catalyzes the irreversible cleavage of the glycosidic bond in both 5'-methylthioadenosine (MTA) and S-adenosylhomocysteine (SAH/AdoHcy) to adenine and the corresponding thioribose, 5'-methylthioribose and S-ribosylhomocysteine, respectively. Also cleaves 5'-deoxyadenosine, a toxic by-product of radical S-adenosylmethionine (SAM) enzymes, into 5-deoxyribose and adenine. Thus, is required for in vivo function of the radical SAM enzymes biotin synthase and lipoic acid synthase, that are inhibited by 5'-deoxyadenosine accumulation.</text>
</comment>
<comment type="catalytic activity">
    <reaction evidence="1">
        <text>S-adenosyl-L-homocysteine + H2O = S-(5-deoxy-D-ribos-5-yl)-L-homocysteine + adenine</text>
        <dbReference type="Rhea" id="RHEA:17805"/>
        <dbReference type="ChEBI" id="CHEBI:15377"/>
        <dbReference type="ChEBI" id="CHEBI:16708"/>
        <dbReference type="ChEBI" id="CHEBI:57856"/>
        <dbReference type="ChEBI" id="CHEBI:58195"/>
        <dbReference type="EC" id="3.2.2.9"/>
    </reaction>
</comment>
<comment type="catalytic activity">
    <reaction evidence="1">
        <text>S-methyl-5'-thioadenosine + H2O = 5-(methylsulfanyl)-D-ribose + adenine</text>
        <dbReference type="Rhea" id="RHEA:13617"/>
        <dbReference type="ChEBI" id="CHEBI:15377"/>
        <dbReference type="ChEBI" id="CHEBI:16708"/>
        <dbReference type="ChEBI" id="CHEBI:17509"/>
        <dbReference type="ChEBI" id="CHEBI:78440"/>
        <dbReference type="EC" id="3.2.2.9"/>
    </reaction>
</comment>
<comment type="catalytic activity">
    <reaction evidence="1">
        <text>5'-deoxyadenosine + H2O = 5-deoxy-D-ribose + adenine</text>
        <dbReference type="Rhea" id="RHEA:29859"/>
        <dbReference type="ChEBI" id="CHEBI:15377"/>
        <dbReference type="ChEBI" id="CHEBI:16708"/>
        <dbReference type="ChEBI" id="CHEBI:17319"/>
        <dbReference type="ChEBI" id="CHEBI:149540"/>
        <dbReference type="EC" id="3.2.2.9"/>
    </reaction>
    <physiologicalReaction direction="left-to-right" evidence="1">
        <dbReference type="Rhea" id="RHEA:29860"/>
    </physiologicalReaction>
</comment>
<comment type="pathway">
    <text evidence="1">Amino-acid biosynthesis; L-methionine biosynthesis via salvage pathway; S-methyl-5-thio-alpha-D-ribose 1-phosphate from S-methyl-5'-thioadenosine (hydrolase route): step 1/2.</text>
</comment>
<comment type="subunit">
    <text evidence="1">Homodimer.</text>
</comment>
<comment type="similarity">
    <text evidence="1">Belongs to the PNP/UDP phosphorylase family. MtnN subfamily.</text>
</comment>
<name>MTNN_ESCF3</name>
<reference key="1">
    <citation type="journal article" date="2009" name="PLoS Genet.">
        <title>Organised genome dynamics in the Escherichia coli species results in highly diverse adaptive paths.</title>
        <authorList>
            <person name="Touchon M."/>
            <person name="Hoede C."/>
            <person name="Tenaillon O."/>
            <person name="Barbe V."/>
            <person name="Baeriswyl S."/>
            <person name="Bidet P."/>
            <person name="Bingen E."/>
            <person name="Bonacorsi S."/>
            <person name="Bouchier C."/>
            <person name="Bouvet O."/>
            <person name="Calteau A."/>
            <person name="Chiapello H."/>
            <person name="Clermont O."/>
            <person name="Cruveiller S."/>
            <person name="Danchin A."/>
            <person name="Diard M."/>
            <person name="Dossat C."/>
            <person name="Karoui M.E."/>
            <person name="Frapy E."/>
            <person name="Garry L."/>
            <person name="Ghigo J.M."/>
            <person name="Gilles A.M."/>
            <person name="Johnson J."/>
            <person name="Le Bouguenec C."/>
            <person name="Lescat M."/>
            <person name="Mangenot S."/>
            <person name="Martinez-Jehanne V."/>
            <person name="Matic I."/>
            <person name="Nassif X."/>
            <person name="Oztas S."/>
            <person name="Petit M.A."/>
            <person name="Pichon C."/>
            <person name="Rouy Z."/>
            <person name="Ruf C.S."/>
            <person name="Schneider D."/>
            <person name="Tourret J."/>
            <person name="Vacherie B."/>
            <person name="Vallenet D."/>
            <person name="Medigue C."/>
            <person name="Rocha E.P.C."/>
            <person name="Denamur E."/>
        </authorList>
    </citation>
    <scope>NUCLEOTIDE SEQUENCE [LARGE SCALE GENOMIC DNA]</scope>
    <source>
        <strain>ATCC 35469 / DSM 13698 / BCRC 15582 / CCUG 18766 / IAM 14443 / JCM 21226 / LMG 7866 / NBRC 102419 / NCTC 12128 / CDC 0568-73</strain>
    </source>
</reference>